<sequence length="254" mass="28544">MDGGGAHRTPEDVFRDFRARRAGMIKALTTDVEKFYQQCDPEKENLCLYGLPNETWEVNLPAEEVPPELPEPALGINFARDGMDEKDWLSLVAVHSDTWLLAVAFYFGARFGFDKESRKRLFSMINNLPTIYEVVTGTAKKQSKEKTPKTSGKSNKSGTKPSRQPEPNSRGPKMPPPKDEDDSGGEEEEEEEDHENTLCGACGDNYGQDEFWICCDACETWFHGKCVKITPAKAEHIKHYKCPNCSSSSKRARA</sequence>
<proteinExistence type="evidence at transcript level"/>
<gene>
    <name type="ordered locus">Os11g0244800</name>
    <name type="ordered locus">LOC_Os11g14010</name>
    <name type="ORF">OsJ_33509</name>
    <name type="ORF">OSJNBa0004P24</name>
    <name type="ORF">OSJNBa0024M06</name>
</gene>
<feature type="chain" id="PRO_0000412951" description="PHD finger protein ALFIN-LIKE 8">
    <location>
        <begin position="1"/>
        <end position="254"/>
    </location>
</feature>
<feature type="zinc finger region" description="PHD-type" evidence="2">
    <location>
        <begin position="196"/>
        <end position="248"/>
    </location>
</feature>
<feature type="region of interest" description="Disordered" evidence="3">
    <location>
        <begin position="137"/>
        <end position="194"/>
    </location>
</feature>
<feature type="compositionally biased region" description="Low complexity" evidence="3">
    <location>
        <begin position="149"/>
        <end position="162"/>
    </location>
</feature>
<feature type="compositionally biased region" description="Acidic residues" evidence="3">
    <location>
        <begin position="179"/>
        <end position="194"/>
    </location>
</feature>
<feature type="site" description="Histone H3K4me3 binding" evidence="1">
    <location>
        <position position="206"/>
    </location>
</feature>
<feature type="site" description="Histone H3K4me3 binding" evidence="1">
    <location>
        <position position="212"/>
    </location>
</feature>
<feature type="site" description="Histone H3K4me3 binding" evidence="1">
    <location>
        <position position="216"/>
    </location>
</feature>
<feature type="site" description="Histone H3K4me3 binding" evidence="1">
    <location>
        <position position="221"/>
    </location>
</feature>
<evidence type="ECO:0000250" key="1"/>
<evidence type="ECO:0000255" key="2">
    <source>
        <dbReference type="PROSITE-ProRule" id="PRU00146"/>
    </source>
</evidence>
<evidence type="ECO:0000256" key="3">
    <source>
        <dbReference type="SAM" id="MobiDB-lite"/>
    </source>
</evidence>
<evidence type="ECO:0000305" key="4"/>
<organism>
    <name type="scientific">Oryza sativa subsp. japonica</name>
    <name type="common">Rice</name>
    <dbReference type="NCBI Taxonomy" id="39947"/>
    <lineage>
        <taxon>Eukaryota</taxon>
        <taxon>Viridiplantae</taxon>
        <taxon>Streptophyta</taxon>
        <taxon>Embryophyta</taxon>
        <taxon>Tracheophyta</taxon>
        <taxon>Spermatophyta</taxon>
        <taxon>Magnoliopsida</taxon>
        <taxon>Liliopsida</taxon>
        <taxon>Poales</taxon>
        <taxon>Poaceae</taxon>
        <taxon>BOP clade</taxon>
        <taxon>Oryzoideae</taxon>
        <taxon>Oryzeae</taxon>
        <taxon>Oryzinae</taxon>
        <taxon>Oryza</taxon>
        <taxon>Oryza sativa</taxon>
    </lineage>
</organism>
<name>ALFL8_ORYSJ</name>
<comment type="function">
    <text evidence="1">Histone-binding component that specifically recognizes H3 tails trimethylated on 'Lys-4' (H3K4me3), which mark transcription start sites of virtually all active genes.</text>
</comment>
<comment type="subunit">
    <text evidence="1">Interacts with H3K4me3 and to a lesser extent with H3K4me2.</text>
</comment>
<comment type="subcellular location">
    <subcellularLocation>
        <location evidence="1">Nucleus</location>
    </subcellularLocation>
</comment>
<comment type="domain">
    <text evidence="1">The PHD-type zinc finger mediates the binding to H3K4me3.</text>
</comment>
<comment type="similarity">
    <text evidence="4">Belongs to the Alfin family.</text>
</comment>
<comment type="sequence caution" evidence="4">
    <conflict type="erroneous gene model prediction">
        <sequence resource="EMBL-CDS" id="AAX92933"/>
    </conflict>
</comment>
<comment type="sequence caution" evidence="4">
    <conflict type="erroneous gene model prediction">
        <sequence resource="EMBL-CDS" id="AAX95841"/>
    </conflict>
</comment>
<dbReference type="EMBL" id="AC135459">
    <property type="protein sequence ID" value="AAX92933.1"/>
    <property type="status" value="ALT_SEQ"/>
    <property type="molecule type" value="Genomic_DNA"/>
</dbReference>
<dbReference type="EMBL" id="AC138000">
    <property type="protein sequence ID" value="AAX95841.1"/>
    <property type="status" value="ALT_SEQ"/>
    <property type="molecule type" value="Genomic_DNA"/>
</dbReference>
<dbReference type="EMBL" id="DP000010">
    <property type="protein sequence ID" value="ABA92392.2"/>
    <property type="molecule type" value="Genomic_DNA"/>
</dbReference>
<dbReference type="EMBL" id="AP008217">
    <property type="protein sequence ID" value="BAF27962.1"/>
    <property type="molecule type" value="Genomic_DNA"/>
</dbReference>
<dbReference type="EMBL" id="AP014967">
    <property type="protein sequence ID" value="BAT13403.1"/>
    <property type="molecule type" value="Genomic_DNA"/>
</dbReference>
<dbReference type="EMBL" id="CM000148">
    <property type="protein sequence ID" value="EEE51908.1"/>
    <property type="molecule type" value="Genomic_DNA"/>
</dbReference>
<dbReference type="EMBL" id="AK103215">
    <property type="protein sequence ID" value="BAG95959.1"/>
    <property type="molecule type" value="mRNA"/>
</dbReference>
<dbReference type="RefSeq" id="XP_015617482.1">
    <property type="nucleotide sequence ID" value="XM_015761996.1"/>
</dbReference>
<dbReference type="SMR" id="Q2R837"/>
<dbReference type="FunCoup" id="Q2R837">
    <property type="interactions" value="1468"/>
</dbReference>
<dbReference type="STRING" id="39947.Q2R837"/>
<dbReference type="PaxDb" id="39947-Q2R837"/>
<dbReference type="EnsemblPlants" id="Os11t0244800-01">
    <property type="protein sequence ID" value="Os11t0244800-01"/>
    <property type="gene ID" value="Os11g0244800"/>
</dbReference>
<dbReference type="Gramene" id="Os11t0244800-01">
    <property type="protein sequence ID" value="Os11t0244800-01"/>
    <property type="gene ID" value="Os11g0244800"/>
</dbReference>
<dbReference type="KEGG" id="dosa:Os11g0244800"/>
<dbReference type="eggNOG" id="KOG1632">
    <property type="taxonomic scope" value="Eukaryota"/>
</dbReference>
<dbReference type="HOGENOM" id="CLU_058315_1_0_1"/>
<dbReference type="InParanoid" id="Q2R837"/>
<dbReference type="OMA" id="PREFEAQ"/>
<dbReference type="OrthoDB" id="436852at2759"/>
<dbReference type="Proteomes" id="UP000000763">
    <property type="component" value="Chromosome 11"/>
</dbReference>
<dbReference type="Proteomes" id="UP000007752">
    <property type="component" value="Chromosome 11"/>
</dbReference>
<dbReference type="Proteomes" id="UP000059680">
    <property type="component" value="Chromosome 11"/>
</dbReference>
<dbReference type="GO" id="GO:0005634">
    <property type="term" value="C:nucleus"/>
    <property type="evidence" value="ECO:0000318"/>
    <property type="project" value="GO_Central"/>
</dbReference>
<dbReference type="GO" id="GO:0042393">
    <property type="term" value="F:histone binding"/>
    <property type="evidence" value="ECO:0007669"/>
    <property type="project" value="InterPro"/>
</dbReference>
<dbReference type="GO" id="GO:0000976">
    <property type="term" value="F:transcription cis-regulatory region binding"/>
    <property type="evidence" value="ECO:0000318"/>
    <property type="project" value="GO_Central"/>
</dbReference>
<dbReference type="GO" id="GO:0003712">
    <property type="term" value="F:transcription coregulator activity"/>
    <property type="evidence" value="ECO:0000318"/>
    <property type="project" value="GO_Central"/>
</dbReference>
<dbReference type="GO" id="GO:0008270">
    <property type="term" value="F:zinc ion binding"/>
    <property type="evidence" value="ECO:0007669"/>
    <property type="project" value="UniProtKB-KW"/>
</dbReference>
<dbReference type="GO" id="GO:0006325">
    <property type="term" value="P:chromatin organization"/>
    <property type="evidence" value="ECO:0007669"/>
    <property type="project" value="UniProtKB-KW"/>
</dbReference>
<dbReference type="GO" id="GO:0006355">
    <property type="term" value="P:regulation of DNA-templated transcription"/>
    <property type="evidence" value="ECO:0007669"/>
    <property type="project" value="InterPro"/>
</dbReference>
<dbReference type="CDD" id="cd15613">
    <property type="entry name" value="PHD_AL_plant"/>
    <property type="match status" value="1"/>
</dbReference>
<dbReference type="FunFam" id="3.30.40.10:FF:000306">
    <property type="entry name" value="PHD finger alfin-like protein"/>
    <property type="match status" value="1"/>
</dbReference>
<dbReference type="Gene3D" id="3.30.40.10">
    <property type="entry name" value="Zinc/RING finger domain, C3HC4 (zinc finger)"/>
    <property type="match status" value="1"/>
</dbReference>
<dbReference type="InterPro" id="IPR045104">
    <property type="entry name" value="Alfin"/>
</dbReference>
<dbReference type="InterPro" id="IPR021998">
    <property type="entry name" value="Alfin_N"/>
</dbReference>
<dbReference type="InterPro" id="IPR044104">
    <property type="entry name" value="PHD_AL_plant"/>
</dbReference>
<dbReference type="InterPro" id="IPR019786">
    <property type="entry name" value="Zinc_finger_PHD-type_CS"/>
</dbReference>
<dbReference type="InterPro" id="IPR011011">
    <property type="entry name" value="Znf_FYVE_PHD"/>
</dbReference>
<dbReference type="InterPro" id="IPR001965">
    <property type="entry name" value="Znf_PHD"/>
</dbReference>
<dbReference type="InterPro" id="IPR019787">
    <property type="entry name" value="Znf_PHD-finger"/>
</dbReference>
<dbReference type="InterPro" id="IPR013083">
    <property type="entry name" value="Znf_RING/FYVE/PHD"/>
</dbReference>
<dbReference type="PANTHER" id="PTHR12321">
    <property type="entry name" value="CPG BINDING PROTEIN"/>
    <property type="match status" value="1"/>
</dbReference>
<dbReference type="PANTHER" id="PTHR12321:SF180">
    <property type="entry name" value="PHD FINGER PROTEIN ALFIN-LIKE 8"/>
    <property type="match status" value="1"/>
</dbReference>
<dbReference type="Pfam" id="PF12165">
    <property type="entry name" value="Alfin"/>
    <property type="match status" value="1"/>
</dbReference>
<dbReference type="Pfam" id="PF00628">
    <property type="entry name" value="PHD"/>
    <property type="match status" value="1"/>
</dbReference>
<dbReference type="SMART" id="SM00249">
    <property type="entry name" value="PHD"/>
    <property type="match status" value="1"/>
</dbReference>
<dbReference type="SUPFAM" id="SSF57903">
    <property type="entry name" value="FYVE/PHD zinc finger"/>
    <property type="match status" value="1"/>
</dbReference>
<dbReference type="PROSITE" id="PS01359">
    <property type="entry name" value="ZF_PHD_1"/>
    <property type="match status" value="1"/>
</dbReference>
<dbReference type="PROSITE" id="PS50016">
    <property type="entry name" value="ZF_PHD_2"/>
    <property type="match status" value="1"/>
</dbReference>
<keyword id="KW-0156">Chromatin regulator</keyword>
<keyword id="KW-0479">Metal-binding</keyword>
<keyword id="KW-0539">Nucleus</keyword>
<keyword id="KW-1185">Reference proteome</keyword>
<keyword id="KW-0804">Transcription</keyword>
<keyword id="KW-0805">Transcription regulation</keyword>
<keyword id="KW-0862">Zinc</keyword>
<keyword id="KW-0863">Zinc-finger</keyword>
<accession>Q2R837</accession>
<accession>A0A0P0Y0Z4</accession>
<accession>Q53M06</accession>
<reference key="1">
    <citation type="journal article" date="2005" name="BMC Biol.">
        <title>The sequence of rice chromosomes 11 and 12, rich in disease resistance genes and recent gene duplications.</title>
        <authorList>
            <consortium name="The rice chromosomes 11 and 12 sequencing consortia"/>
        </authorList>
    </citation>
    <scope>NUCLEOTIDE SEQUENCE [LARGE SCALE GENOMIC DNA]</scope>
    <source>
        <strain>cv. Nipponbare</strain>
    </source>
</reference>
<reference key="2">
    <citation type="journal article" date="2005" name="Nature">
        <title>The map-based sequence of the rice genome.</title>
        <authorList>
            <consortium name="International rice genome sequencing project (IRGSP)"/>
        </authorList>
    </citation>
    <scope>NUCLEOTIDE SEQUENCE [LARGE SCALE GENOMIC DNA]</scope>
    <source>
        <strain>cv. Nipponbare</strain>
    </source>
</reference>
<reference key="3">
    <citation type="journal article" date="2008" name="Nucleic Acids Res.">
        <title>The rice annotation project database (RAP-DB): 2008 update.</title>
        <authorList>
            <consortium name="The rice annotation project (RAP)"/>
        </authorList>
    </citation>
    <scope>GENOME REANNOTATION</scope>
    <source>
        <strain>cv. Nipponbare</strain>
    </source>
</reference>
<reference key="4">
    <citation type="journal article" date="2013" name="Rice">
        <title>Improvement of the Oryza sativa Nipponbare reference genome using next generation sequence and optical map data.</title>
        <authorList>
            <person name="Kawahara Y."/>
            <person name="de la Bastide M."/>
            <person name="Hamilton J.P."/>
            <person name="Kanamori H."/>
            <person name="McCombie W.R."/>
            <person name="Ouyang S."/>
            <person name="Schwartz D.C."/>
            <person name="Tanaka T."/>
            <person name="Wu J."/>
            <person name="Zhou S."/>
            <person name="Childs K.L."/>
            <person name="Davidson R.M."/>
            <person name="Lin H."/>
            <person name="Quesada-Ocampo L."/>
            <person name="Vaillancourt B."/>
            <person name="Sakai H."/>
            <person name="Lee S.S."/>
            <person name="Kim J."/>
            <person name="Numa H."/>
            <person name="Itoh T."/>
            <person name="Buell C.R."/>
            <person name="Matsumoto T."/>
        </authorList>
    </citation>
    <scope>GENOME REANNOTATION</scope>
    <source>
        <strain>cv. Nipponbare</strain>
    </source>
</reference>
<reference key="5">
    <citation type="journal article" date="2005" name="PLoS Biol.">
        <title>The genomes of Oryza sativa: a history of duplications.</title>
        <authorList>
            <person name="Yu J."/>
            <person name="Wang J."/>
            <person name="Lin W."/>
            <person name="Li S."/>
            <person name="Li H."/>
            <person name="Zhou J."/>
            <person name="Ni P."/>
            <person name="Dong W."/>
            <person name="Hu S."/>
            <person name="Zeng C."/>
            <person name="Zhang J."/>
            <person name="Zhang Y."/>
            <person name="Li R."/>
            <person name="Xu Z."/>
            <person name="Li S."/>
            <person name="Li X."/>
            <person name="Zheng H."/>
            <person name="Cong L."/>
            <person name="Lin L."/>
            <person name="Yin J."/>
            <person name="Geng J."/>
            <person name="Li G."/>
            <person name="Shi J."/>
            <person name="Liu J."/>
            <person name="Lv H."/>
            <person name="Li J."/>
            <person name="Wang J."/>
            <person name="Deng Y."/>
            <person name="Ran L."/>
            <person name="Shi X."/>
            <person name="Wang X."/>
            <person name="Wu Q."/>
            <person name="Li C."/>
            <person name="Ren X."/>
            <person name="Wang J."/>
            <person name="Wang X."/>
            <person name="Li D."/>
            <person name="Liu D."/>
            <person name="Zhang X."/>
            <person name="Ji Z."/>
            <person name="Zhao W."/>
            <person name="Sun Y."/>
            <person name="Zhang Z."/>
            <person name="Bao J."/>
            <person name="Han Y."/>
            <person name="Dong L."/>
            <person name="Ji J."/>
            <person name="Chen P."/>
            <person name="Wu S."/>
            <person name="Liu J."/>
            <person name="Xiao Y."/>
            <person name="Bu D."/>
            <person name="Tan J."/>
            <person name="Yang L."/>
            <person name="Ye C."/>
            <person name="Zhang J."/>
            <person name="Xu J."/>
            <person name="Zhou Y."/>
            <person name="Yu Y."/>
            <person name="Zhang B."/>
            <person name="Zhuang S."/>
            <person name="Wei H."/>
            <person name="Liu B."/>
            <person name="Lei M."/>
            <person name="Yu H."/>
            <person name="Li Y."/>
            <person name="Xu H."/>
            <person name="Wei S."/>
            <person name="He X."/>
            <person name="Fang L."/>
            <person name="Zhang Z."/>
            <person name="Zhang Y."/>
            <person name="Huang X."/>
            <person name="Su Z."/>
            <person name="Tong W."/>
            <person name="Li J."/>
            <person name="Tong Z."/>
            <person name="Li S."/>
            <person name="Ye J."/>
            <person name="Wang L."/>
            <person name="Fang L."/>
            <person name="Lei T."/>
            <person name="Chen C.-S."/>
            <person name="Chen H.-C."/>
            <person name="Xu Z."/>
            <person name="Li H."/>
            <person name="Huang H."/>
            <person name="Zhang F."/>
            <person name="Xu H."/>
            <person name="Li N."/>
            <person name="Zhao C."/>
            <person name="Li S."/>
            <person name="Dong L."/>
            <person name="Huang Y."/>
            <person name="Li L."/>
            <person name="Xi Y."/>
            <person name="Qi Q."/>
            <person name="Li W."/>
            <person name="Zhang B."/>
            <person name="Hu W."/>
            <person name="Zhang Y."/>
            <person name="Tian X."/>
            <person name="Jiao Y."/>
            <person name="Liang X."/>
            <person name="Jin J."/>
            <person name="Gao L."/>
            <person name="Zheng W."/>
            <person name="Hao B."/>
            <person name="Liu S.-M."/>
            <person name="Wang W."/>
            <person name="Yuan L."/>
            <person name="Cao M."/>
            <person name="McDermott J."/>
            <person name="Samudrala R."/>
            <person name="Wang J."/>
            <person name="Wong G.K.-S."/>
            <person name="Yang H."/>
        </authorList>
    </citation>
    <scope>NUCLEOTIDE SEQUENCE [LARGE SCALE GENOMIC DNA]</scope>
    <source>
        <strain>cv. Nipponbare</strain>
    </source>
</reference>
<reference key="6">
    <citation type="journal article" date="2003" name="Science">
        <title>Collection, mapping, and annotation of over 28,000 cDNA clones from japonica rice.</title>
        <authorList>
            <consortium name="The rice full-length cDNA consortium"/>
        </authorList>
    </citation>
    <scope>NUCLEOTIDE SEQUENCE [LARGE SCALE MRNA]</scope>
    <source>
        <strain>cv. Nipponbare</strain>
    </source>
</reference>
<reference key="7">
    <citation type="journal article" date="2009" name="Plant J.">
        <title>Arabidopsis ING and Alfin1-like protein families localize to the nucleus and bind to H3K4me3/2 via plant homeodomain fingers.</title>
        <authorList>
            <person name="Lee W.Y."/>
            <person name="Lee D."/>
            <person name="Chung W.I."/>
            <person name="Kwon C.S."/>
        </authorList>
    </citation>
    <scope>GENE FAMILY</scope>
</reference>
<protein>
    <recommendedName>
        <fullName>PHD finger protein ALFIN-LIKE 8</fullName>
    </recommendedName>
</protein>